<reference key="1">
    <citation type="journal article" date="1999" name="Nature">
        <title>Sequence and analysis of chromosome 4 of the plant Arabidopsis thaliana.</title>
        <authorList>
            <person name="Mayer K.F.X."/>
            <person name="Schueller C."/>
            <person name="Wambutt R."/>
            <person name="Murphy G."/>
            <person name="Volckaert G."/>
            <person name="Pohl T."/>
            <person name="Duesterhoeft A."/>
            <person name="Stiekema W."/>
            <person name="Entian K.-D."/>
            <person name="Terryn N."/>
            <person name="Harris B."/>
            <person name="Ansorge W."/>
            <person name="Brandt P."/>
            <person name="Grivell L.A."/>
            <person name="Rieger M."/>
            <person name="Weichselgartner M."/>
            <person name="de Simone V."/>
            <person name="Obermaier B."/>
            <person name="Mache R."/>
            <person name="Mueller M."/>
            <person name="Kreis M."/>
            <person name="Delseny M."/>
            <person name="Puigdomenech P."/>
            <person name="Watson M."/>
            <person name="Schmidtheini T."/>
            <person name="Reichert B."/>
            <person name="Portetelle D."/>
            <person name="Perez-Alonso M."/>
            <person name="Boutry M."/>
            <person name="Bancroft I."/>
            <person name="Vos P."/>
            <person name="Hoheisel J."/>
            <person name="Zimmermann W."/>
            <person name="Wedler H."/>
            <person name="Ridley P."/>
            <person name="Langham S.-A."/>
            <person name="McCullagh B."/>
            <person name="Bilham L."/>
            <person name="Robben J."/>
            <person name="van der Schueren J."/>
            <person name="Grymonprez B."/>
            <person name="Chuang Y.-J."/>
            <person name="Vandenbussche F."/>
            <person name="Braeken M."/>
            <person name="Weltjens I."/>
            <person name="Voet M."/>
            <person name="Bastiaens I."/>
            <person name="Aert R."/>
            <person name="Defoor E."/>
            <person name="Weitzenegger T."/>
            <person name="Bothe G."/>
            <person name="Ramsperger U."/>
            <person name="Hilbert H."/>
            <person name="Braun M."/>
            <person name="Holzer E."/>
            <person name="Brandt A."/>
            <person name="Peters S."/>
            <person name="van Staveren M."/>
            <person name="Dirkse W."/>
            <person name="Mooijman P."/>
            <person name="Klein Lankhorst R."/>
            <person name="Rose M."/>
            <person name="Hauf J."/>
            <person name="Koetter P."/>
            <person name="Berneiser S."/>
            <person name="Hempel S."/>
            <person name="Feldpausch M."/>
            <person name="Lamberth S."/>
            <person name="Van den Daele H."/>
            <person name="De Keyser A."/>
            <person name="Buysshaert C."/>
            <person name="Gielen J."/>
            <person name="Villarroel R."/>
            <person name="De Clercq R."/>
            <person name="van Montagu M."/>
            <person name="Rogers J."/>
            <person name="Cronin A."/>
            <person name="Quail M.A."/>
            <person name="Bray-Allen S."/>
            <person name="Clark L."/>
            <person name="Doggett J."/>
            <person name="Hall S."/>
            <person name="Kay M."/>
            <person name="Lennard N."/>
            <person name="McLay K."/>
            <person name="Mayes R."/>
            <person name="Pettett A."/>
            <person name="Rajandream M.A."/>
            <person name="Lyne M."/>
            <person name="Benes V."/>
            <person name="Rechmann S."/>
            <person name="Borkova D."/>
            <person name="Bloecker H."/>
            <person name="Scharfe M."/>
            <person name="Grimm M."/>
            <person name="Loehnert T.-H."/>
            <person name="Dose S."/>
            <person name="de Haan M."/>
            <person name="Maarse A.C."/>
            <person name="Schaefer M."/>
            <person name="Mueller-Auer S."/>
            <person name="Gabel C."/>
            <person name="Fuchs M."/>
            <person name="Fartmann B."/>
            <person name="Granderath K."/>
            <person name="Dauner D."/>
            <person name="Herzl A."/>
            <person name="Neumann S."/>
            <person name="Argiriou A."/>
            <person name="Vitale D."/>
            <person name="Liguori R."/>
            <person name="Piravandi E."/>
            <person name="Massenet O."/>
            <person name="Quigley F."/>
            <person name="Clabauld G."/>
            <person name="Muendlein A."/>
            <person name="Felber R."/>
            <person name="Schnabl S."/>
            <person name="Hiller R."/>
            <person name="Schmidt W."/>
            <person name="Lecharny A."/>
            <person name="Aubourg S."/>
            <person name="Chefdor F."/>
            <person name="Cooke R."/>
            <person name="Berger C."/>
            <person name="Monfort A."/>
            <person name="Casacuberta E."/>
            <person name="Gibbons T."/>
            <person name="Weber N."/>
            <person name="Vandenbol M."/>
            <person name="Bargues M."/>
            <person name="Terol J."/>
            <person name="Torres A."/>
            <person name="Perez-Perez A."/>
            <person name="Purnelle B."/>
            <person name="Bent E."/>
            <person name="Johnson S."/>
            <person name="Tacon D."/>
            <person name="Jesse T."/>
            <person name="Heijnen L."/>
            <person name="Schwarz S."/>
            <person name="Scholler P."/>
            <person name="Heber S."/>
            <person name="Francs P."/>
            <person name="Bielke C."/>
            <person name="Frishman D."/>
            <person name="Haase D."/>
            <person name="Lemcke K."/>
            <person name="Mewes H.-W."/>
            <person name="Stocker S."/>
            <person name="Zaccaria P."/>
            <person name="Bevan M."/>
            <person name="Wilson R.K."/>
            <person name="de la Bastide M."/>
            <person name="Habermann K."/>
            <person name="Parnell L."/>
            <person name="Dedhia N."/>
            <person name="Gnoj L."/>
            <person name="Schutz K."/>
            <person name="Huang E."/>
            <person name="Spiegel L."/>
            <person name="Sekhon M."/>
            <person name="Murray J."/>
            <person name="Sheet P."/>
            <person name="Cordes M."/>
            <person name="Abu-Threideh J."/>
            <person name="Stoneking T."/>
            <person name="Kalicki J."/>
            <person name="Graves T."/>
            <person name="Harmon G."/>
            <person name="Edwards J."/>
            <person name="Latreille P."/>
            <person name="Courtney L."/>
            <person name="Cloud J."/>
            <person name="Abbott A."/>
            <person name="Scott K."/>
            <person name="Johnson D."/>
            <person name="Minx P."/>
            <person name="Bentley D."/>
            <person name="Fulton B."/>
            <person name="Miller N."/>
            <person name="Greco T."/>
            <person name="Kemp K."/>
            <person name="Kramer J."/>
            <person name="Fulton L."/>
            <person name="Mardis E."/>
            <person name="Dante M."/>
            <person name="Pepin K."/>
            <person name="Hillier L.W."/>
            <person name="Nelson J."/>
            <person name="Spieth J."/>
            <person name="Ryan E."/>
            <person name="Andrews S."/>
            <person name="Geisel C."/>
            <person name="Layman D."/>
            <person name="Du H."/>
            <person name="Ali J."/>
            <person name="Berghoff A."/>
            <person name="Jones K."/>
            <person name="Drone K."/>
            <person name="Cotton M."/>
            <person name="Joshu C."/>
            <person name="Antonoiu B."/>
            <person name="Zidanic M."/>
            <person name="Strong C."/>
            <person name="Sun H."/>
            <person name="Lamar B."/>
            <person name="Yordan C."/>
            <person name="Ma P."/>
            <person name="Zhong J."/>
            <person name="Preston R."/>
            <person name="Vil D."/>
            <person name="Shekher M."/>
            <person name="Matero A."/>
            <person name="Shah R."/>
            <person name="Swaby I.K."/>
            <person name="O'Shaughnessy A."/>
            <person name="Rodriguez M."/>
            <person name="Hoffman J."/>
            <person name="Till S."/>
            <person name="Granat S."/>
            <person name="Shohdy N."/>
            <person name="Hasegawa A."/>
            <person name="Hameed A."/>
            <person name="Lodhi M."/>
            <person name="Johnson A."/>
            <person name="Chen E."/>
            <person name="Marra M.A."/>
            <person name="Martienssen R."/>
            <person name="McCombie W.R."/>
        </authorList>
    </citation>
    <scope>NUCLEOTIDE SEQUENCE [LARGE SCALE GENOMIC DNA]</scope>
    <source>
        <strain>cv. Columbia</strain>
    </source>
</reference>
<reference key="2">
    <citation type="journal article" date="2017" name="Plant J.">
        <title>Araport11: a complete reannotation of the Arabidopsis thaliana reference genome.</title>
        <authorList>
            <person name="Cheng C.Y."/>
            <person name="Krishnakumar V."/>
            <person name="Chan A.P."/>
            <person name="Thibaud-Nissen F."/>
            <person name="Schobel S."/>
            <person name="Town C.D."/>
        </authorList>
    </citation>
    <scope>GENOME REANNOTATION</scope>
    <source>
        <strain>cv. Columbia</strain>
    </source>
</reference>
<reference key="3">
    <citation type="journal article" date="2003" name="Science">
        <title>Empirical analysis of transcriptional activity in the Arabidopsis genome.</title>
        <authorList>
            <person name="Yamada K."/>
            <person name="Lim J."/>
            <person name="Dale J.M."/>
            <person name="Chen H."/>
            <person name="Shinn P."/>
            <person name="Palm C.J."/>
            <person name="Southwick A.M."/>
            <person name="Wu H.C."/>
            <person name="Kim C.J."/>
            <person name="Nguyen M."/>
            <person name="Pham P.K."/>
            <person name="Cheuk R.F."/>
            <person name="Karlin-Newmann G."/>
            <person name="Liu S.X."/>
            <person name="Lam B."/>
            <person name="Sakano H."/>
            <person name="Wu T."/>
            <person name="Yu G."/>
            <person name="Miranda M."/>
            <person name="Quach H.L."/>
            <person name="Tripp M."/>
            <person name="Chang C.H."/>
            <person name="Lee J.M."/>
            <person name="Toriumi M.J."/>
            <person name="Chan M.M."/>
            <person name="Tang C.C."/>
            <person name="Onodera C.S."/>
            <person name="Deng J.M."/>
            <person name="Akiyama K."/>
            <person name="Ansari Y."/>
            <person name="Arakawa T."/>
            <person name="Banh J."/>
            <person name="Banno F."/>
            <person name="Bowser L."/>
            <person name="Brooks S.Y."/>
            <person name="Carninci P."/>
            <person name="Chao Q."/>
            <person name="Choy N."/>
            <person name="Enju A."/>
            <person name="Goldsmith A.D."/>
            <person name="Gurjal M."/>
            <person name="Hansen N.F."/>
            <person name="Hayashizaki Y."/>
            <person name="Johnson-Hopson C."/>
            <person name="Hsuan V.W."/>
            <person name="Iida K."/>
            <person name="Karnes M."/>
            <person name="Khan S."/>
            <person name="Koesema E."/>
            <person name="Ishida J."/>
            <person name="Jiang P.X."/>
            <person name="Jones T."/>
            <person name="Kawai J."/>
            <person name="Kamiya A."/>
            <person name="Meyers C."/>
            <person name="Nakajima M."/>
            <person name="Narusaka M."/>
            <person name="Seki M."/>
            <person name="Sakurai T."/>
            <person name="Satou M."/>
            <person name="Tamse R."/>
            <person name="Vaysberg M."/>
            <person name="Wallender E.K."/>
            <person name="Wong C."/>
            <person name="Yamamura Y."/>
            <person name="Yuan S."/>
            <person name="Shinozaki K."/>
            <person name="Davis R.W."/>
            <person name="Theologis A."/>
            <person name="Ecker J.R."/>
        </authorList>
    </citation>
    <scope>NUCLEOTIDE SEQUENCE [LARGE SCALE MRNA]</scope>
    <source>
        <strain>cv. Columbia</strain>
    </source>
</reference>
<reference key="4">
    <citation type="submission" date="2002-03" db="EMBL/GenBank/DDBJ databases">
        <title>Full-length cDNA from Arabidopsis thaliana.</title>
        <authorList>
            <person name="Brover V.V."/>
            <person name="Troukhan M.E."/>
            <person name="Alexandrov N.A."/>
            <person name="Lu Y.-P."/>
            <person name="Flavell R.B."/>
            <person name="Feldmann K.A."/>
        </authorList>
    </citation>
    <scope>NUCLEOTIDE SEQUENCE [LARGE SCALE MRNA]</scope>
</reference>
<reference key="5">
    <citation type="journal article" date="1993" name="Plant J.">
        <title>An inventory of 1152 expressed sequence tags obtained by partial sequencing of cDNAs from Arabidopsis thaliana.</title>
        <authorList>
            <person name="Hoefte H."/>
            <person name="Desprez T."/>
            <person name="Amselem J."/>
            <person name="Chiapello H."/>
            <person name="Rouze P."/>
            <person name="Caboche M."/>
            <person name="Moisan A."/>
            <person name="Jourjon M.-F."/>
            <person name="Charpenteau J.-L."/>
            <person name="Berthomieu P."/>
            <person name="Guerrier D."/>
            <person name="Giraudat J."/>
            <person name="Quigley F."/>
            <person name="Thomas F."/>
            <person name="Yu D.-Y."/>
            <person name="Mache R."/>
            <person name="Raynal M."/>
            <person name="Cooke R."/>
            <person name="Grellet F."/>
            <person name="Delseny M."/>
            <person name="Parmentier Y."/>
            <person name="de Marcillac G."/>
            <person name="Gigot C."/>
            <person name="Fleck J."/>
            <person name="Philipps G."/>
            <person name="Axelos M."/>
            <person name="Bardet C."/>
            <person name="Tremousaygue D."/>
            <person name="Lescure B."/>
        </authorList>
    </citation>
    <scope>NUCLEOTIDE SEQUENCE [LARGE SCALE MRNA] OF 3-113</scope>
    <source>
        <strain>cv. Columbia</strain>
        <tissue>Green siliques</tissue>
    </source>
</reference>
<reference key="6">
    <citation type="journal article" date="2001" name="Plant Physiol.">
        <title>The organization of cytoplasmic ribosomal protein genes in the Arabidopsis genome.</title>
        <authorList>
            <person name="Barakat A."/>
            <person name="Szick-Miranda K."/>
            <person name="Chang I.-F."/>
            <person name="Guyot R."/>
            <person name="Blanc G."/>
            <person name="Cooke R."/>
            <person name="Delseny M."/>
            <person name="Bailey-Serres J."/>
        </authorList>
    </citation>
    <scope>GENE FAMILY ORGANIZATION</scope>
    <scope>NOMENCLATURE</scope>
</reference>
<reference key="7">
    <citation type="journal article" date="2023" name="Plant Cell">
        <title>An updated nomenclature for plant ribosomal protein genes.</title>
        <authorList>
            <person name="Scarpin M.R."/>
            <person name="Busche M."/>
            <person name="Martinez R.E."/>
            <person name="Harper L.C."/>
            <person name="Reiser L."/>
            <person name="Szakonyi D."/>
            <person name="Merchante C."/>
            <person name="Lan T."/>
            <person name="Xiong W."/>
            <person name="Mo B."/>
            <person name="Tang G."/>
            <person name="Chen X."/>
            <person name="Bailey-Serres J."/>
            <person name="Browning K.S."/>
            <person name="Brunkard J.O."/>
        </authorList>
    </citation>
    <scope>NOMENCLATURE</scope>
</reference>
<protein>
    <recommendedName>
        <fullName evidence="1">Large ribosomal subunit protein eL32z</fullName>
    </recommendedName>
    <alternativeName>
        <fullName>60S ribosomal protein L32-1</fullName>
    </alternativeName>
</protein>
<gene>
    <name type="primary">RPL32A</name>
    <name type="ordered locus">At4g18100</name>
    <name type="ORF">F15J5.70</name>
</gene>
<feature type="chain" id="PRO_0000131136" description="Large ribosomal subunit protein eL32z">
    <location>
        <begin position="1"/>
        <end position="133"/>
    </location>
</feature>
<feature type="sequence conflict" description="In Ref. 4; AAM63787." evidence="2" ref="4">
    <original>A</original>
    <variation>T</variation>
    <location>
        <position position="16"/>
    </location>
</feature>
<feature type="sequence conflict" description="In Ref. 4; AAM63787." evidence="2" ref="4">
    <original>V</original>
    <variation>M</variation>
    <location>
        <position position="43"/>
    </location>
</feature>
<feature type="sequence conflict" description="In Ref. 5; CAA79050." evidence="2" ref="5">
    <original>K</original>
    <variation>R</variation>
    <location>
        <position position="105"/>
    </location>
</feature>
<comment type="similarity">
    <text evidence="2">Belongs to the eukaryotic ribosomal protein eL32 family.</text>
</comment>
<sequence>MAVPLLTKKVVKKRSAKFIRPQSDRRITVKESWRRPKGIDSRVRRKFKGVTLMPNVGYGSDKKTRHYLPNGFKKFVVHNTSELELLMMHNRTYCAEIAHNVSTKKRKAIVERASQLDVVVTNRLARLRSQEDE</sequence>
<name>RL321_ARATH</name>
<evidence type="ECO:0000303" key="1">
    <source>
    </source>
</evidence>
<evidence type="ECO:0000305" key="2"/>
<proteinExistence type="evidence at transcript level"/>
<accession>P49211</accession>
<accession>Q8LC86</accession>
<accession>Q9SVW1</accession>
<dbReference type="EMBL" id="AL110123">
    <property type="protein sequence ID" value="CAB53651.1"/>
    <property type="molecule type" value="Genomic_DNA"/>
</dbReference>
<dbReference type="EMBL" id="AL161547">
    <property type="protein sequence ID" value="CAB78812.1"/>
    <property type="molecule type" value="Genomic_DNA"/>
</dbReference>
<dbReference type="EMBL" id="CP002687">
    <property type="protein sequence ID" value="AEE83996.1"/>
    <property type="molecule type" value="Genomic_DNA"/>
</dbReference>
<dbReference type="EMBL" id="AY057566">
    <property type="protein sequence ID" value="AAL09805.1"/>
    <property type="molecule type" value="mRNA"/>
</dbReference>
<dbReference type="EMBL" id="AY072399">
    <property type="protein sequence ID" value="AAL62391.1"/>
    <property type="molecule type" value="mRNA"/>
</dbReference>
<dbReference type="EMBL" id="BT000235">
    <property type="protein sequence ID" value="AAN15554.1"/>
    <property type="molecule type" value="mRNA"/>
</dbReference>
<dbReference type="EMBL" id="AY086736">
    <property type="protein sequence ID" value="AAM63787.1"/>
    <property type="molecule type" value="mRNA"/>
</dbReference>
<dbReference type="EMBL" id="Z17739">
    <property type="protein sequence ID" value="CAA79050.1"/>
    <property type="molecule type" value="mRNA"/>
</dbReference>
<dbReference type="PIR" id="T14810">
    <property type="entry name" value="T14810"/>
</dbReference>
<dbReference type="RefSeq" id="NP_193544.1">
    <property type="nucleotide sequence ID" value="NM_117920.8"/>
</dbReference>
<dbReference type="SMR" id="P49211"/>
<dbReference type="BioGRID" id="12828">
    <property type="interactions" value="81"/>
</dbReference>
<dbReference type="FunCoup" id="P49211">
    <property type="interactions" value="3725"/>
</dbReference>
<dbReference type="STRING" id="3702.P49211"/>
<dbReference type="iPTMnet" id="P49211"/>
<dbReference type="MetOSite" id="P49211"/>
<dbReference type="PaxDb" id="3702-AT4G18100.1"/>
<dbReference type="ProteomicsDB" id="226090"/>
<dbReference type="EnsemblPlants" id="AT4G18100.1">
    <property type="protein sequence ID" value="AT4G18100.1"/>
    <property type="gene ID" value="AT4G18100"/>
</dbReference>
<dbReference type="GeneID" id="827535"/>
<dbReference type="Gramene" id="AT4G18100.1">
    <property type="protein sequence ID" value="AT4G18100.1"/>
    <property type="gene ID" value="AT4G18100"/>
</dbReference>
<dbReference type="KEGG" id="ath:AT4G18100"/>
<dbReference type="Araport" id="AT4G18100"/>
<dbReference type="TAIR" id="AT4G18100"/>
<dbReference type="eggNOG" id="KOG0878">
    <property type="taxonomic scope" value="Eukaryota"/>
</dbReference>
<dbReference type="HOGENOM" id="CLU_071479_4_1_1"/>
<dbReference type="InParanoid" id="P49211"/>
<dbReference type="OMA" id="HPSGYEE"/>
<dbReference type="OrthoDB" id="1038506at2759"/>
<dbReference type="PhylomeDB" id="P49211"/>
<dbReference type="CD-CODE" id="4299E36E">
    <property type="entry name" value="Nucleolus"/>
</dbReference>
<dbReference type="PRO" id="PR:P49211"/>
<dbReference type="Proteomes" id="UP000006548">
    <property type="component" value="Chromosome 4"/>
</dbReference>
<dbReference type="ExpressionAtlas" id="P49211">
    <property type="expression patterns" value="baseline and differential"/>
</dbReference>
<dbReference type="GO" id="GO:0005829">
    <property type="term" value="C:cytosol"/>
    <property type="evidence" value="ECO:0007005"/>
    <property type="project" value="TAIR"/>
</dbReference>
<dbReference type="GO" id="GO:0022625">
    <property type="term" value="C:cytosolic large ribosomal subunit"/>
    <property type="evidence" value="ECO:0007005"/>
    <property type="project" value="TAIR"/>
</dbReference>
<dbReference type="GO" id="GO:0022626">
    <property type="term" value="C:cytosolic ribosome"/>
    <property type="evidence" value="ECO:0007005"/>
    <property type="project" value="TAIR"/>
</dbReference>
<dbReference type="GO" id="GO:0005730">
    <property type="term" value="C:nucleolus"/>
    <property type="evidence" value="ECO:0007005"/>
    <property type="project" value="TAIR"/>
</dbReference>
<dbReference type="GO" id="GO:0003729">
    <property type="term" value="F:mRNA binding"/>
    <property type="evidence" value="ECO:0000314"/>
    <property type="project" value="TAIR"/>
</dbReference>
<dbReference type="GO" id="GO:0003735">
    <property type="term" value="F:structural constituent of ribosome"/>
    <property type="evidence" value="ECO:0000314"/>
    <property type="project" value="CAFA"/>
</dbReference>
<dbReference type="GO" id="GO:0006412">
    <property type="term" value="P:translation"/>
    <property type="evidence" value="ECO:0007669"/>
    <property type="project" value="InterPro"/>
</dbReference>
<dbReference type="CDD" id="cd00513">
    <property type="entry name" value="Ribosomal_L32_L32e"/>
    <property type="match status" value="1"/>
</dbReference>
<dbReference type="InterPro" id="IPR001515">
    <property type="entry name" value="Ribosomal_eL32"/>
</dbReference>
<dbReference type="InterPro" id="IPR018263">
    <property type="entry name" value="Ribosomal_eL32_CS"/>
</dbReference>
<dbReference type="InterPro" id="IPR036351">
    <property type="entry name" value="Ribosomal_eL32_sf"/>
</dbReference>
<dbReference type="PANTHER" id="PTHR23413">
    <property type="entry name" value="60S RIBOSOMAL PROTEIN L32 AND DNA-DIRECTED RNA POLYMERASE II, SUBUNIT N"/>
    <property type="match status" value="1"/>
</dbReference>
<dbReference type="PANTHER" id="PTHR23413:SF21">
    <property type="entry name" value="LARGE RIBOSOMAL SUBUNIT PROTEIN EL32Y-RELATED"/>
    <property type="match status" value="1"/>
</dbReference>
<dbReference type="Pfam" id="PF01655">
    <property type="entry name" value="Ribosomal_L32e"/>
    <property type="match status" value="1"/>
</dbReference>
<dbReference type="SMART" id="SM01393">
    <property type="entry name" value="Ribosomal_L32e"/>
    <property type="match status" value="1"/>
</dbReference>
<dbReference type="SUPFAM" id="SSF52042">
    <property type="entry name" value="Ribosomal protein L32e"/>
    <property type="match status" value="1"/>
</dbReference>
<dbReference type="PROSITE" id="PS00580">
    <property type="entry name" value="RIBOSOMAL_L32E"/>
    <property type="match status" value="1"/>
</dbReference>
<keyword id="KW-1185">Reference proteome</keyword>
<keyword id="KW-0687">Ribonucleoprotein</keyword>
<keyword id="KW-0689">Ribosomal protein</keyword>
<organism>
    <name type="scientific">Arabidopsis thaliana</name>
    <name type="common">Mouse-ear cress</name>
    <dbReference type="NCBI Taxonomy" id="3702"/>
    <lineage>
        <taxon>Eukaryota</taxon>
        <taxon>Viridiplantae</taxon>
        <taxon>Streptophyta</taxon>
        <taxon>Embryophyta</taxon>
        <taxon>Tracheophyta</taxon>
        <taxon>Spermatophyta</taxon>
        <taxon>Magnoliopsida</taxon>
        <taxon>eudicotyledons</taxon>
        <taxon>Gunneridae</taxon>
        <taxon>Pentapetalae</taxon>
        <taxon>rosids</taxon>
        <taxon>malvids</taxon>
        <taxon>Brassicales</taxon>
        <taxon>Brassicaceae</taxon>
        <taxon>Camelineae</taxon>
        <taxon>Arabidopsis</taxon>
    </lineage>
</organism>